<proteinExistence type="inferred from homology"/>
<keyword id="KW-0067">ATP-binding</keyword>
<keyword id="KW-0133">Cell shape</keyword>
<keyword id="KW-0961">Cell wall biogenesis/degradation</keyword>
<keyword id="KW-0963">Cytoplasm</keyword>
<keyword id="KW-0436">Ligase</keyword>
<keyword id="KW-0460">Magnesium</keyword>
<keyword id="KW-0464">Manganese</keyword>
<keyword id="KW-0479">Metal-binding</keyword>
<keyword id="KW-0547">Nucleotide-binding</keyword>
<keyword id="KW-0573">Peptidoglycan synthesis</keyword>
<keyword id="KW-1185">Reference proteome</keyword>
<organism>
    <name type="scientific">Synechococcus sp. (strain WH7803)</name>
    <dbReference type="NCBI Taxonomy" id="32051"/>
    <lineage>
        <taxon>Bacteria</taxon>
        <taxon>Bacillati</taxon>
        <taxon>Cyanobacteriota</taxon>
        <taxon>Cyanophyceae</taxon>
        <taxon>Synechococcales</taxon>
        <taxon>Synechococcaceae</taxon>
        <taxon>Synechococcus</taxon>
    </lineage>
</organism>
<accession>A5GML7</accession>
<protein>
    <recommendedName>
        <fullName evidence="2">D-alanine--D-alanine ligase</fullName>
        <ecNumber evidence="2">6.3.2.4</ecNumber>
    </recommendedName>
    <alternativeName>
        <fullName evidence="2">D-Ala-D-Ala ligase</fullName>
    </alternativeName>
    <alternativeName>
        <fullName evidence="2">D-alanylalanine synthetase</fullName>
    </alternativeName>
</protein>
<evidence type="ECO:0000250" key="1"/>
<evidence type="ECO:0000255" key="2">
    <source>
        <dbReference type="HAMAP-Rule" id="MF_00047"/>
    </source>
</evidence>
<gene>
    <name evidence="2" type="primary">ddl</name>
    <name type="ordered locus">SynWH7803_1756</name>
</gene>
<reference key="1">
    <citation type="submission" date="2006-05" db="EMBL/GenBank/DDBJ databases">
        <authorList>
            <consortium name="Genoscope"/>
        </authorList>
    </citation>
    <scope>NUCLEOTIDE SEQUENCE [LARGE SCALE GENOMIC DNA]</scope>
    <source>
        <strain>WH7803</strain>
    </source>
</reference>
<comment type="function">
    <text evidence="2">Cell wall formation.</text>
</comment>
<comment type="catalytic activity">
    <reaction evidence="2">
        <text>2 D-alanine + ATP = D-alanyl-D-alanine + ADP + phosphate + H(+)</text>
        <dbReference type="Rhea" id="RHEA:11224"/>
        <dbReference type="ChEBI" id="CHEBI:15378"/>
        <dbReference type="ChEBI" id="CHEBI:30616"/>
        <dbReference type="ChEBI" id="CHEBI:43474"/>
        <dbReference type="ChEBI" id="CHEBI:57416"/>
        <dbReference type="ChEBI" id="CHEBI:57822"/>
        <dbReference type="ChEBI" id="CHEBI:456216"/>
        <dbReference type="EC" id="6.3.2.4"/>
    </reaction>
</comment>
<comment type="cofactor">
    <cofactor evidence="1">
        <name>Mg(2+)</name>
        <dbReference type="ChEBI" id="CHEBI:18420"/>
    </cofactor>
    <cofactor evidence="1">
        <name>Mn(2+)</name>
        <dbReference type="ChEBI" id="CHEBI:29035"/>
    </cofactor>
    <text evidence="1">Binds 2 magnesium or manganese ions per subunit.</text>
</comment>
<comment type="pathway">
    <text evidence="2">Cell wall biogenesis; peptidoglycan biosynthesis.</text>
</comment>
<comment type="subcellular location">
    <subcellularLocation>
        <location evidence="2">Cytoplasm</location>
    </subcellularLocation>
</comment>
<comment type="similarity">
    <text evidence="2">Belongs to the D-alanine--D-alanine ligase family.</text>
</comment>
<sequence length="353" mass="38403">MPTSLLRVGVVFGGASGEHAVSIRSARTVIEAFSAPENQERFAVIPHYIDREGRWWGPAVAERALEQNKALDAHELPQPLPAPGLRHWPVDPDSVDLWYPVLHGPNGEDGTVQGLFTLMNKPFVGSGVLGSAVGMDKLAMKAAFAAAGLSQVPYMGLTAADLEDPERLEQLLTRVEQELGYPCFVKPANLGSSVGITKANNRDELLAGLHQAAALDPRLLVEQGVNARELECAVLGRRHLRASVVGEIRFDADWYDYETKYTEGRSHTLIPAPLPALVSQQIQAMAIRACHAVHAFGQARVDVFYDETSGEIWLNEINTLPGFTSQSMYPTLWAASGIPLPQLVAELVDTAQE</sequence>
<feature type="chain" id="PRO_0000341182" description="D-alanine--D-alanine ligase">
    <location>
        <begin position="1"/>
        <end position="353"/>
    </location>
</feature>
<feature type="domain" description="ATP-grasp" evidence="2">
    <location>
        <begin position="141"/>
        <end position="349"/>
    </location>
</feature>
<feature type="binding site" evidence="2">
    <location>
        <begin position="176"/>
        <end position="231"/>
    </location>
    <ligand>
        <name>ATP</name>
        <dbReference type="ChEBI" id="CHEBI:30616"/>
    </ligand>
</feature>
<feature type="binding site" evidence="2">
    <location>
        <position position="302"/>
    </location>
    <ligand>
        <name>Mg(2+)</name>
        <dbReference type="ChEBI" id="CHEBI:18420"/>
        <label>1</label>
    </ligand>
</feature>
<feature type="binding site" evidence="2">
    <location>
        <position position="316"/>
    </location>
    <ligand>
        <name>Mg(2+)</name>
        <dbReference type="ChEBI" id="CHEBI:18420"/>
        <label>1</label>
    </ligand>
</feature>
<feature type="binding site" evidence="2">
    <location>
        <position position="316"/>
    </location>
    <ligand>
        <name>Mg(2+)</name>
        <dbReference type="ChEBI" id="CHEBI:18420"/>
        <label>2</label>
    </ligand>
</feature>
<feature type="binding site" evidence="2">
    <location>
        <position position="318"/>
    </location>
    <ligand>
        <name>Mg(2+)</name>
        <dbReference type="ChEBI" id="CHEBI:18420"/>
        <label>2</label>
    </ligand>
</feature>
<dbReference type="EC" id="6.3.2.4" evidence="2"/>
<dbReference type="EMBL" id="CT971583">
    <property type="protein sequence ID" value="CAK24182.1"/>
    <property type="molecule type" value="Genomic_DNA"/>
</dbReference>
<dbReference type="SMR" id="A5GML7"/>
<dbReference type="STRING" id="32051.SynWH7803_1756"/>
<dbReference type="KEGG" id="syx:SynWH7803_1756"/>
<dbReference type="eggNOG" id="COG1181">
    <property type="taxonomic scope" value="Bacteria"/>
</dbReference>
<dbReference type="HOGENOM" id="CLU_039268_0_0_3"/>
<dbReference type="OrthoDB" id="9813261at2"/>
<dbReference type="UniPathway" id="UPA00219"/>
<dbReference type="Proteomes" id="UP000001566">
    <property type="component" value="Chromosome"/>
</dbReference>
<dbReference type="GO" id="GO:0005829">
    <property type="term" value="C:cytosol"/>
    <property type="evidence" value="ECO:0007669"/>
    <property type="project" value="TreeGrafter"/>
</dbReference>
<dbReference type="GO" id="GO:0005524">
    <property type="term" value="F:ATP binding"/>
    <property type="evidence" value="ECO:0007669"/>
    <property type="project" value="UniProtKB-KW"/>
</dbReference>
<dbReference type="GO" id="GO:0008716">
    <property type="term" value="F:D-alanine-D-alanine ligase activity"/>
    <property type="evidence" value="ECO:0007669"/>
    <property type="project" value="UniProtKB-UniRule"/>
</dbReference>
<dbReference type="GO" id="GO:0046872">
    <property type="term" value="F:metal ion binding"/>
    <property type="evidence" value="ECO:0007669"/>
    <property type="project" value="UniProtKB-KW"/>
</dbReference>
<dbReference type="GO" id="GO:0071555">
    <property type="term" value="P:cell wall organization"/>
    <property type="evidence" value="ECO:0007669"/>
    <property type="project" value="UniProtKB-KW"/>
</dbReference>
<dbReference type="GO" id="GO:0009252">
    <property type="term" value="P:peptidoglycan biosynthetic process"/>
    <property type="evidence" value="ECO:0007669"/>
    <property type="project" value="UniProtKB-UniRule"/>
</dbReference>
<dbReference type="GO" id="GO:0008360">
    <property type="term" value="P:regulation of cell shape"/>
    <property type="evidence" value="ECO:0007669"/>
    <property type="project" value="UniProtKB-KW"/>
</dbReference>
<dbReference type="FunFam" id="3.30.1490.20:FF:000007">
    <property type="entry name" value="D-alanine--D-alanine ligase"/>
    <property type="match status" value="1"/>
</dbReference>
<dbReference type="FunFam" id="3.30.470.20:FF:000008">
    <property type="entry name" value="D-alanine--D-alanine ligase"/>
    <property type="match status" value="1"/>
</dbReference>
<dbReference type="Gene3D" id="3.40.50.20">
    <property type="match status" value="1"/>
</dbReference>
<dbReference type="Gene3D" id="3.30.1490.20">
    <property type="entry name" value="ATP-grasp fold, A domain"/>
    <property type="match status" value="1"/>
</dbReference>
<dbReference type="Gene3D" id="3.30.470.20">
    <property type="entry name" value="ATP-grasp fold, B domain"/>
    <property type="match status" value="1"/>
</dbReference>
<dbReference type="HAMAP" id="MF_00047">
    <property type="entry name" value="Dala_Dala_lig"/>
    <property type="match status" value="1"/>
</dbReference>
<dbReference type="InterPro" id="IPR011761">
    <property type="entry name" value="ATP-grasp"/>
</dbReference>
<dbReference type="InterPro" id="IPR013815">
    <property type="entry name" value="ATP_grasp_subdomain_1"/>
</dbReference>
<dbReference type="InterPro" id="IPR000291">
    <property type="entry name" value="D-Ala_lig_Van_CS"/>
</dbReference>
<dbReference type="InterPro" id="IPR005905">
    <property type="entry name" value="D_ala_D_ala"/>
</dbReference>
<dbReference type="InterPro" id="IPR011095">
    <property type="entry name" value="Dala_Dala_lig_C"/>
</dbReference>
<dbReference type="InterPro" id="IPR011127">
    <property type="entry name" value="Dala_Dala_lig_N"/>
</dbReference>
<dbReference type="InterPro" id="IPR016185">
    <property type="entry name" value="PreATP-grasp_dom_sf"/>
</dbReference>
<dbReference type="NCBIfam" id="TIGR01205">
    <property type="entry name" value="D_ala_D_alaTIGR"/>
    <property type="match status" value="1"/>
</dbReference>
<dbReference type="NCBIfam" id="NF002528">
    <property type="entry name" value="PRK01966.1-4"/>
    <property type="match status" value="1"/>
</dbReference>
<dbReference type="PANTHER" id="PTHR23132">
    <property type="entry name" value="D-ALANINE--D-ALANINE LIGASE"/>
    <property type="match status" value="1"/>
</dbReference>
<dbReference type="PANTHER" id="PTHR23132:SF25">
    <property type="entry name" value="D-ALANINE--D-ALANINE LIGASE A"/>
    <property type="match status" value="1"/>
</dbReference>
<dbReference type="Pfam" id="PF07478">
    <property type="entry name" value="Dala_Dala_lig_C"/>
    <property type="match status" value="1"/>
</dbReference>
<dbReference type="Pfam" id="PF01820">
    <property type="entry name" value="Dala_Dala_lig_N"/>
    <property type="match status" value="1"/>
</dbReference>
<dbReference type="PIRSF" id="PIRSF039102">
    <property type="entry name" value="Ddl/VanB"/>
    <property type="match status" value="1"/>
</dbReference>
<dbReference type="SUPFAM" id="SSF56059">
    <property type="entry name" value="Glutathione synthetase ATP-binding domain-like"/>
    <property type="match status" value="1"/>
</dbReference>
<dbReference type="SUPFAM" id="SSF52440">
    <property type="entry name" value="PreATP-grasp domain"/>
    <property type="match status" value="1"/>
</dbReference>
<dbReference type="PROSITE" id="PS50975">
    <property type="entry name" value="ATP_GRASP"/>
    <property type="match status" value="1"/>
</dbReference>
<dbReference type="PROSITE" id="PS00843">
    <property type="entry name" value="DALA_DALA_LIGASE_1"/>
    <property type="match status" value="1"/>
</dbReference>
<dbReference type="PROSITE" id="PS00844">
    <property type="entry name" value="DALA_DALA_LIGASE_2"/>
    <property type="match status" value="1"/>
</dbReference>
<name>DDL_SYNPW</name>